<feature type="chain" id="PRO_1000070595" description="Error-prone DNA polymerase">
    <location>
        <begin position="1"/>
        <end position="1165"/>
    </location>
</feature>
<feature type="region of interest" description="Disordered" evidence="2">
    <location>
        <begin position="1111"/>
        <end position="1165"/>
    </location>
</feature>
<feature type="compositionally biased region" description="Basic and acidic residues" evidence="2">
    <location>
        <begin position="1152"/>
        <end position="1165"/>
    </location>
</feature>
<accession>Q2IU52</accession>
<keyword id="KW-0963">Cytoplasm</keyword>
<keyword id="KW-0227">DNA damage</keyword>
<keyword id="KW-0234">DNA repair</keyword>
<keyword id="KW-0235">DNA replication</keyword>
<keyword id="KW-0239">DNA-directed DNA polymerase</keyword>
<keyword id="KW-0548">Nucleotidyltransferase</keyword>
<keyword id="KW-1185">Reference proteome</keyword>
<keyword id="KW-0808">Transferase</keyword>
<comment type="function">
    <text evidence="1">DNA polymerase involved in damage-induced mutagenesis and translesion synthesis (TLS). It is not the major replicative DNA polymerase.</text>
</comment>
<comment type="catalytic activity">
    <reaction evidence="1">
        <text>DNA(n) + a 2'-deoxyribonucleoside 5'-triphosphate = DNA(n+1) + diphosphate</text>
        <dbReference type="Rhea" id="RHEA:22508"/>
        <dbReference type="Rhea" id="RHEA-COMP:17339"/>
        <dbReference type="Rhea" id="RHEA-COMP:17340"/>
        <dbReference type="ChEBI" id="CHEBI:33019"/>
        <dbReference type="ChEBI" id="CHEBI:61560"/>
        <dbReference type="ChEBI" id="CHEBI:173112"/>
        <dbReference type="EC" id="2.7.7.7"/>
    </reaction>
</comment>
<comment type="subcellular location">
    <subcellularLocation>
        <location evidence="1">Cytoplasm</location>
    </subcellularLocation>
</comment>
<comment type="similarity">
    <text evidence="1">Belongs to the DNA polymerase type-C family. DnaE2 subfamily.</text>
</comment>
<name>DNAE2_RHOP2</name>
<evidence type="ECO:0000255" key="1">
    <source>
        <dbReference type="HAMAP-Rule" id="MF_01902"/>
    </source>
</evidence>
<evidence type="ECO:0000256" key="2">
    <source>
        <dbReference type="SAM" id="MobiDB-lite"/>
    </source>
</evidence>
<gene>
    <name evidence="1" type="primary">dnaE2</name>
    <name type="ordered locus">RPB_3563</name>
</gene>
<proteinExistence type="inferred from homology"/>
<reference key="1">
    <citation type="submission" date="2006-01" db="EMBL/GenBank/DDBJ databases">
        <title>Complete sequence of Rhodopseudomonas palustris HaA2.</title>
        <authorList>
            <consortium name="US DOE Joint Genome Institute"/>
            <person name="Copeland A."/>
            <person name="Lucas S."/>
            <person name="Lapidus A."/>
            <person name="Barry K."/>
            <person name="Detter J.C."/>
            <person name="Glavina T."/>
            <person name="Hammon N."/>
            <person name="Israni S."/>
            <person name="Pitluck S."/>
            <person name="Chain P."/>
            <person name="Malfatti S."/>
            <person name="Shin M."/>
            <person name="Vergez L."/>
            <person name="Schmutz J."/>
            <person name="Larimer F."/>
            <person name="Land M."/>
            <person name="Hauser L."/>
            <person name="Pelletier D.A."/>
            <person name="Kyrpides N."/>
            <person name="Anderson I."/>
            <person name="Oda Y."/>
            <person name="Harwood C.S."/>
            <person name="Richardson P."/>
        </authorList>
    </citation>
    <scope>NUCLEOTIDE SEQUENCE [LARGE SCALE GENOMIC DNA]</scope>
    <source>
        <strain>HaA2</strain>
    </source>
</reference>
<sequence>MNAPRYAEIGVTTNFSFLEGGSHPQDYVHQASRLGLDAIGIADRNTLAGVVRAYSELDNEELAYKPKLLIGARLCFVDGTPDVLAYPTDRAAYGRLCRLLSAGKLRAGKGECHLTFADLEAFVSSNAARPFPSSWPGLTRPSTSLQPRVLQDVDARDKPGHDGGKREIGRSQILFVLMPPYRFQAKAITAALERLTALNSGNVWLALAPYYRGDDKRRLARLRRIAAAADVPGIATNDVLYHHPSRRALQDVLTCVRDKTTIDKAGRRLEGNAERHLKPAAEMARLFRADLDAVAETLRFADRISFTLDELKYHYPDEPVPPGKTAQQHLEDLTREGIATYFPNGISDRLRATIAKELTLIAKRDYAHYFLTVHDIVRYARSQNILCQGRGSAANSAVCYVLGITCVDPTEIDLLFERFVSEERDEPPDIDVDFEHSRREEVMQYIYRRYGRHRAAIVSTVIHYRPRSAIRDVGKALGLSEDVTAALADTVWGSWGKGLSEMQVRQAGLDPTNPMIGRAVELATELIGFPRHLSQHVGGYVLTQDRLDSYVPIGNAAMADRTFIEWDKDDIDAVKMMKVDVLALGMLTCIRKGFDLIAQHKGVRFQLSDIKSEDDNNVYQMLQRGESIGVFQVESRAQMNMLPRLKPRCFYDLVIEVAIVRPGPIQGDMVHPYLRRRNGQEPVVYPSPSGEAGDKNELQQILGKTLGVPLFQEQAMRIAIEAAHFTPDEANQLRRAMATFRNVGTIGKFESKMIGNLMARGYDATFAKNCFEQIKGFGSYGFPESHAASFAKLVYVSAWMKCEHPDAFCCALLNSQPMGFYAPAQIVGDARANKVEVRPVDVSFSDGQCTLEERCGAYHAVRLGFRQIDGFRWADPDEERVRLEAGLPPSDDWAARIVAARARGPFGSLEQFARITALPKRALILLADADAFRSLGLDRRAALWAVRRLPDDVPLPLFEAASAREQQDEQAAPLPQMPMAEHVVADYQTVRLSLKGHPLEFLRAVFATERVVTCREVSETRRNGRRVRCAGVVLVRQRPGSASGVIFMTIEDETGIANIVVWPSVMEKFRKEVMGARLILVEGKIQASPEGVVHLVAERLVDRSSEMGRLSEGLARPPLPTGADLYEPLTYEPLNGDRRDNPDAPAQRLRHPRDVRILPPSRDFH</sequence>
<organism>
    <name type="scientific">Rhodopseudomonas palustris (strain HaA2)</name>
    <dbReference type="NCBI Taxonomy" id="316058"/>
    <lineage>
        <taxon>Bacteria</taxon>
        <taxon>Pseudomonadati</taxon>
        <taxon>Pseudomonadota</taxon>
        <taxon>Alphaproteobacteria</taxon>
        <taxon>Hyphomicrobiales</taxon>
        <taxon>Nitrobacteraceae</taxon>
        <taxon>Rhodopseudomonas</taxon>
    </lineage>
</organism>
<dbReference type="EC" id="2.7.7.7" evidence="1"/>
<dbReference type="EMBL" id="CP000250">
    <property type="protein sequence ID" value="ABD08258.1"/>
    <property type="molecule type" value="Genomic_DNA"/>
</dbReference>
<dbReference type="RefSeq" id="WP_011442442.1">
    <property type="nucleotide sequence ID" value="NC_007778.1"/>
</dbReference>
<dbReference type="SMR" id="Q2IU52"/>
<dbReference type="STRING" id="316058.RPB_3563"/>
<dbReference type="KEGG" id="rpb:RPB_3563"/>
<dbReference type="eggNOG" id="COG0587">
    <property type="taxonomic scope" value="Bacteria"/>
</dbReference>
<dbReference type="HOGENOM" id="CLU_001600_4_0_5"/>
<dbReference type="OrthoDB" id="9803237at2"/>
<dbReference type="Proteomes" id="UP000008809">
    <property type="component" value="Chromosome"/>
</dbReference>
<dbReference type="GO" id="GO:0005737">
    <property type="term" value="C:cytoplasm"/>
    <property type="evidence" value="ECO:0007669"/>
    <property type="project" value="UniProtKB-SubCell"/>
</dbReference>
<dbReference type="GO" id="GO:0008408">
    <property type="term" value="F:3'-5' exonuclease activity"/>
    <property type="evidence" value="ECO:0007669"/>
    <property type="project" value="InterPro"/>
</dbReference>
<dbReference type="GO" id="GO:0003887">
    <property type="term" value="F:DNA-directed DNA polymerase activity"/>
    <property type="evidence" value="ECO:0007669"/>
    <property type="project" value="UniProtKB-UniRule"/>
</dbReference>
<dbReference type="GO" id="GO:0003676">
    <property type="term" value="F:nucleic acid binding"/>
    <property type="evidence" value="ECO:0007669"/>
    <property type="project" value="InterPro"/>
</dbReference>
<dbReference type="GO" id="GO:0006281">
    <property type="term" value="P:DNA repair"/>
    <property type="evidence" value="ECO:0007669"/>
    <property type="project" value="UniProtKB-UniRule"/>
</dbReference>
<dbReference type="GO" id="GO:0006260">
    <property type="term" value="P:DNA replication"/>
    <property type="evidence" value="ECO:0007669"/>
    <property type="project" value="UniProtKB-KW"/>
</dbReference>
<dbReference type="CDD" id="cd04485">
    <property type="entry name" value="DnaE_OBF"/>
    <property type="match status" value="1"/>
</dbReference>
<dbReference type="CDD" id="cd07434">
    <property type="entry name" value="PHP_PolIIIA_DnaE2"/>
    <property type="match status" value="1"/>
</dbReference>
<dbReference type="Gene3D" id="3.20.20.140">
    <property type="entry name" value="Metal-dependent hydrolases"/>
    <property type="match status" value="1"/>
</dbReference>
<dbReference type="Gene3D" id="2.40.50.140">
    <property type="entry name" value="Nucleic acid-binding proteins"/>
    <property type="match status" value="1"/>
</dbReference>
<dbReference type="HAMAP" id="MF_01902">
    <property type="entry name" value="DNApol_error_prone"/>
    <property type="match status" value="1"/>
</dbReference>
<dbReference type="InterPro" id="IPR011708">
    <property type="entry name" value="DNA_pol3_alpha_NTPase_dom"/>
</dbReference>
<dbReference type="InterPro" id="IPR040982">
    <property type="entry name" value="DNA_pol3_finger"/>
</dbReference>
<dbReference type="InterPro" id="IPR023073">
    <property type="entry name" value="DnaE2"/>
</dbReference>
<dbReference type="InterPro" id="IPR004805">
    <property type="entry name" value="DnaE2/DnaE/PolC"/>
</dbReference>
<dbReference type="InterPro" id="IPR029460">
    <property type="entry name" value="DNAPol_HHH"/>
</dbReference>
<dbReference type="InterPro" id="IPR012340">
    <property type="entry name" value="NA-bd_OB-fold"/>
</dbReference>
<dbReference type="InterPro" id="IPR004365">
    <property type="entry name" value="NA-bd_OB_tRNA"/>
</dbReference>
<dbReference type="InterPro" id="IPR004013">
    <property type="entry name" value="PHP_dom"/>
</dbReference>
<dbReference type="InterPro" id="IPR003141">
    <property type="entry name" value="Pol/His_phosphatase_N"/>
</dbReference>
<dbReference type="InterPro" id="IPR016195">
    <property type="entry name" value="Pol/histidinol_Pase-like"/>
</dbReference>
<dbReference type="NCBIfam" id="TIGR00594">
    <property type="entry name" value="polc"/>
    <property type="match status" value="1"/>
</dbReference>
<dbReference type="NCBIfam" id="NF004225">
    <property type="entry name" value="PRK05672.1"/>
    <property type="match status" value="1"/>
</dbReference>
<dbReference type="PANTHER" id="PTHR32294">
    <property type="entry name" value="DNA POLYMERASE III SUBUNIT ALPHA"/>
    <property type="match status" value="1"/>
</dbReference>
<dbReference type="PANTHER" id="PTHR32294:SF4">
    <property type="entry name" value="ERROR-PRONE DNA POLYMERASE"/>
    <property type="match status" value="1"/>
</dbReference>
<dbReference type="Pfam" id="PF07733">
    <property type="entry name" value="DNA_pol3_alpha"/>
    <property type="match status" value="1"/>
</dbReference>
<dbReference type="Pfam" id="PF17657">
    <property type="entry name" value="DNA_pol3_finger"/>
    <property type="match status" value="1"/>
</dbReference>
<dbReference type="Pfam" id="PF14579">
    <property type="entry name" value="HHH_6"/>
    <property type="match status" value="1"/>
</dbReference>
<dbReference type="Pfam" id="PF02811">
    <property type="entry name" value="PHP"/>
    <property type="match status" value="1"/>
</dbReference>
<dbReference type="Pfam" id="PF01336">
    <property type="entry name" value="tRNA_anti-codon"/>
    <property type="match status" value="1"/>
</dbReference>
<dbReference type="SMART" id="SM00481">
    <property type="entry name" value="POLIIIAc"/>
    <property type="match status" value="1"/>
</dbReference>
<dbReference type="SUPFAM" id="SSF89550">
    <property type="entry name" value="PHP domain-like"/>
    <property type="match status" value="1"/>
</dbReference>
<protein>
    <recommendedName>
        <fullName evidence="1">Error-prone DNA polymerase</fullName>
        <ecNumber evidence="1">2.7.7.7</ecNumber>
    </recommendedName>
</protein>